<comment type="function">
    <text evidence="1 3 4">Part of TspanC8 subgroup, composed of 6 members that interact with the transmembrane metalloprotease ADAM10. This interaction is required for ADAM10 exit from the endoplasmic reticulum and for enzymatic maturation and trafficking to the cell surface as well as substrate specificity. Different TspanC8/ADAM10 complexes have distinct substrates (PubMed:23035126, PubMed:26668317). Promotes ADAM10-mediated cleavage of CDH2 (PubMed:26668317). Negatively regulates ligand-induced Notch activity probably by regulating ADAM10 activity (By similarity).</text>
</comment>
<comment type="subunit">
    <text evidence="3 4">Interacts with ADAM10; the interaction influences ADAM10 substrate specificity, endocytosis and turnover.</text>
</comment>
<comment type="subcellular location">
    <subcellularLocation>
        <location evidence="5">Cell membrane</location>
        <topology evidence="7">Multi-pass membrane protein</topology>
    </subcellularLocation>
    <subcellularLocation>
        <location evidence="1">Late endosome membrane</location>
    </subcellularLocation>
</comment>
<comment type="alternative products">
    <event type="alternative splicing"/>
    <isoform>
        <id>F7BWT7-1</id>
        <name>1</name>
        <sequence type="displayed"/>
    </isoform>
    <isoform>
        <id>F7BWT7-2</id>
        <name>2</name>
        <sequence type="described" ref="VSP_042389"/>
    </isoform>
</comment>
<comment type="PTM">
    <text evidence="1">Palmitoylated.</text>
</comment>
<comment type="similarity">
    <text evidence="7">Belongs to the tetraspanin (TM4SF) family.</text>
</comment>
<comment type="sequence caution" evidence="7">
    <conflict type="erroneous initiation">
        <sequence resource="EMBL-CDS" id="BAE42863"/>
    </conflict>
    <text>Extended N-terminus.</text>
</comment>
<proteinExistence type="evidence at protein level"/>
<name>TSN15_MOUSE</name>
<organism>
    <name type="scientific">Mus musculus</name>
    <name type="common">Mouse</name>
    <dbReference type="NCBI Taxonomy" id="10090"/>
    <lineage>
        <taxon>Eukaryota</taxon>
        <taxon>Metazoa</taxon>
        <taxon>Chordata</taxon>
        <taxon>Craniata</taxon>
        <taxon>Vertebrata</taxon>
        <taxon>Euteleostomi</taxon>
        <taxon>Mammalia</taxon>
        <taxon>Eutheria</taxon>
        <taxon>Euarchontoglires</taxon>
        <taxon>Glires</taxon>
        <taxon>Rodentia</taxon>
        <taxon>Myomorpha</taxon>
        <taxon>Muroidea</taxon>
        <taxon>Muridae</taxon>
        <taxon>Murinae</taxon>
        <taxon>Mus</taxon>
        <taxon>Mus</taxon>
    </lineage>
</organism>
<protein>
    <recommendedName>
        <fullName>Tetraspanin-15</fullName>
        <shortName>Tspan-15</shortName>
    </recommendedName>
    <alternativeName>
        <fullName>Transmembrane 4 superfamily member 15</fullName>
    </alternativeName>
</protein>
<reference key="1">
    <citation type="journal article" date="2005" name="Science">
        <title>The transcriptional landscape of the mammalian genome.</title>
        <authorList>
            <person name="Carninci P."/>
            <person name="Kasukawa T."/>
            <person name="Katayama S."/>
            <person name="Gough J."/>
            <person name="Frith M.C."/>
            <person name="Maeda N."/>
            <person name="Oyama R."/>
            <person name="Ravasi T."/>
            <person name="Lenhard B."/>
            <person name="Wells C."/>
            <person name="Kodzius R."/>
            <person name="Shimokawa K."/>
            <person name="Bajic V.B."/>
            <person name="Brenner S.E."/>
            <person name="Batalov S."/>
            <person name="Forrest A.R."/>
            <person name="Zavolan M."/>
            <person name="Davis M.J."/>
            <person name="Wilming L.G."/>
            <person name="Aidinis V."/>
            <person name="Allen J.E."/>
            <person name="Ambesi-Impiombato A."/>
            <person name="Apweiler R."/>
            <person name="Aturaliya R.N."/>
            <person name="Bailey T.L."/>
            <person name="Bansal M."/>
            <person name="Baxter L."/>
            <person name="Beisel K.W."/>
            <person name="Bersano T."/>
            <person name="Bono H."/>
            <person name="Chalk A.M."/>
            <person name="Chiu K.P."/>
            <person name="Choudhary V."/>
            <person name="Christoffels A."/>
            <person name="Clutterbuck D.R."/>
            <person name="Crowe M.L."/>
            <person name="Dalla E."/>
            <person name="Dalrymple B.P."/>
            <person name="de Bono B."/>
            <person name="Della Gatta G."/>
            <person name="di Bernardo D."/>
            <person name="Down T."/>
            <person name="Engstrom P."/>
            <person name="Fagiolini M."/>
            <person name="Faulkner G."/>
            <person name="Fletcher C.F."/>
            <person name="Fukushima T."/>
            <person name="Furuno M."/>
            <person name="Futaki S."/>
            <person name="Gariboldi M."/>
            <person name="Georgii-Hemming P."/>
            <person name="Gingeras T.R."/>
            <person name="Gojobori T."/>
            <person name="Green R.E."/>
            <person name="Gustincich S."/>
            <person name="Harbers M."/>
            <person name="Hayashi Y."/>
            <person name="Hensch T.K."/>
            <person name="Hirokawa N."/>
            <person name="Hill D."/>
            <person name="Huminiecki L."/>
            <person name="Iacono M."/>
            <person name="Ikeo K."/>
            <person name="Iwama A."/>
            <person name="Ishikawa T."/>
            <person name="Jakt M."/>
            <person name="Kanapin A."/>
            <person name="Katoh M."/>
            <person name="Kawasawa Y."/>
            <person name="Kelso J."/>
            <person name="Kitamura H."/>
            <person name="Kitano H."/>
            <person name="Kollias G."/>
            <person name="Krishnan S.P."/>
            <person name="Kruger A."/>
            <person name="Kummerfeld S.K."/>
            <person name="Kurochkin I.V."/>
            <person name="Lareau L.F."/>
            <person name="Lazarevic D."/>
            <person name="Lipovich L."/>
            <person name="Liu J."/>
            <person name="Liuni S."/>
            <person name="McWilliam S."/>
            <person name="Madan Babu M."/>
            <person name="Madera M."/>
            <person name="Marchionni L."/>
            <person name="Matsuda H."/>
            <person name="Matsuzawa S."/>
            <person name="Miki H."/>
            <person name="Mignone F."/>
            <person name="Miyake S."/>
            <person name="Morris K."/>
            <person name="Mottagui-Tabar S."/>
            <person name="Mulder N."/>
            <person name="Nakano N."/>
            <person name="Nakauchi H."/>
            <person name="Ng P."/>
            <person name="Nilsson R."/>
            <person name="Nishiguchi S."/>
            <person name="Nishikawa S."/>
            <person name="Nori F."/>
            <person name="Ohara O."/>
            <person name="Okazaki Y."/>
            <person name="Orlando V."/>
            <person name="Pang K.C."/>
            <person name="Pavan W.J."/>
            <person name="Pavesi G."/>
            <person name="Pesole G."/>
            <person name="Petrovsky N."/>
            <person name="Piazza S."/>
            <person name="Reed J."/>
            <person name="Reid J.F."/>
            <person name="Ring B.Z."/>
            <person name="Ringwald M."/>
            <person name="Rost B."/>
            <person name="Ruan Y."/>
            <person name="Salzberg S.L."/>
            <person name="Sandelin A."/>
            <person name="Schneider C."/>
            <person name="Schoenbach C."/>
            <person name="Sekiguchi K."/>
            <person name="Semple C.A."/>
            <person name="Seno S."/>
            <person name="Sessa L."/>
            <person name="Sheng Y."/>
            <person name="Shibata Y."/>
            <person name="Shimada H."/>
            <person name="Shimada K."/>
            <person name="Silva D."/>
            <person name="Sinclair B."/>
            <person name="Sperling S."/>
            <person name="Stupka E."/>
            <person name="Sugiura K."/>
            <person name="Sultana R."/>
            <person name="Takenaka Y."/>
            <person name="Taki K."/>
            <person name="Tammoja K."/>
            <person name="Tan S.L."/>
            <person name="Tang S."/>
            <person name="Taylor M.S."/>
            <person name="Tegner J."/>
            <person name="Teichmann S.A."/>
            <person name="Ueda H.R."/>
            <person name="van Nimwegen E."/>
            <person name="Verardo R."/>
            <person name="Wei C.L."/>
            <person name="Yagi K."/>
            <person name="Yamanishi H."/>
            <person name="Zabarovsky E."/>
            <person name="Zhu S."/>
            <person name="Zimmer A."/>
            <person name="Hide W."/>
            <person name="Bult C."/>
            <person name="Grimmond S.M."/>
            <person name="Teasdale R.D."/>
            <person name="Liu E.T."/>
            <person name="Brusic V."/>
            <person name="Quackenbush J."/>
            <person name="Wahlestedt C."/>
            <person name="Mattick J.S."/>
            <person name="Hume D.A."/>
            <person name="Kai C."/>
            <person name="Sasaki D."/>
            <person name="Tomaru Y."/>
            <person name="Fukuda S."/>
            <person name="Kanamori-Katayama M."/>
            <person name="Suzuki M."/>
            <person name="Aoki J."/>
            <person name="Arakawa T."/>
            <person name="Iida J."/>
            <person name="Imamura K."/>
            <person name="Itoh M."/>
            <person name="Kato T."/>
            <person name="Kawaji H."/>
            <person name="Kawagashira N."/>
            <person name="Kawashima T."/>
            <person name="Kojima M."/>
            <person name="Kondo S."/>
            <person name="Konno H."/>
            <person name="Nakano K."/>
            <person name="Ninomiya N."/>
            <person name="Nishio T."/>
            <person name="Okada M."/>
            <person name="Plessy C."/>
            <person name="Shibata K."/>
            <person name="Shiraki T."/>
            <person name="Suzuki S."/>
            <person name="Tagami M."/>
            <person name="Waki K."/>
            <person name="Watahiki A."/>
            <person name="Okamura-Oho Y."/>
            <person name="Suzuki H."/>
            <person name="Kawai J."/>
            <person name="Hayashizaki Y."/>
        </authorList>
    </citation>
    <scope>NUCLEOTIDE SEQUENCE [LARGE SCALE MRNA] (ISOFORM 1)</scope>
    <source>
        <strain>NOD</strain>
        <tissue>Spleen</tissue>
    </source>
</reference>
<reference key="2">
    <citation type="journal article" date="2009" name="PLoS Biol.">
        <title>Lineage-specific biology revealed by a finished genome assembly of the mouse.</title>
        <authorList>
            <person name="Church D.M."/>
            <person name="Goodstadt L."/>
            <person name="Hillier L.W."/>
            <person name="Zody M.C."/>
            <person name="Goldstein S."/>
            <person name="She X."/>
            <person name="Bult C.J."/>
            <person name="Agarwala R."/>
            <person name="Cherry J.L."/>
            <person name="DiCuccio M."/>
            <person name="Hlavina W."/>
            <person name="Kapustin Y."/>
            <person name="Meric P."/>
            <person name="Maglott D."/>
            <person name="Birtle Z."/>
            <person name="Marques A.C."/>
            <person name="Graves T."/>
            <person name="Zhou S."/>
            <person name="Teague B."/>
            <person name="Potamousis K."/>
            <person name="Churas C."/>
            <person name="Place M."/>
            <person name="Herschleb J."/>
            <person name="Runnheim R."/>
            <person name="Forrest D."/>
            <person name="Amos-Landgraf J."/>
            <person name="Schwartz D.C."/>
            <person name="Cheng Z."/>
            <person name="Lindblad-Toh K."/>
            <person name="Eichler E.E."/>
            <person name="Ponting C.P."/>
        </authorList>
    </citation>
    <scope>NUCLEOTIDE SEQUENCE [LARGE SCALE GENOMIC DNA]</scope>
    <source>
        <strain>C57BL/6J</strain>
    </source>
</reference>
<reference key="3">
    <citation type="submission" date="2005-07" db="EMBL/GenBank/DDBJ databases">
        <authorList>
            <person name="Mural R.J."/>
            <person name="Adams M.D."/>
            <person name="Myers E.W."/>
            <person name="Smith H.O."/>
            <person name="Venter J.C."/>
        </authorList>
    </citation>
    <scope>NUCLEOTIDE SEQUENCE [LARGE SCALE GENOMIC DNA]</scope>
</reference>
<reference key="4">
    <citation type="journal article" date="2004" name="Genome Res.">
        <title>The status, quality, and expansion of the NIH full-length cDNA project: the Mammalian Gene Collection (MGC).</title>
        <authorList>
            <consortium name="The MGC Project Team"/>
        </authorList>
    </citation>
    <scope>NUCLEOTIDE SEQUENCE [LARGE SCALE MRNA] (ISOFORM 2)</scope>
    <source>
        <strain>Czech II</strain>
        <tissue>Mammary tumor</tissue>
    </source>
</reference>
<reference key="5">
    <citation type="journal article" date="2010" name="Cell">
        <title>A tissue-specific atlas of mouse protein phosphorylation and expression.</title>
        <authorList>
            <person name="Huttlin E.L."/>
            <person name="Jedrychowski M.P."/>
            <person name="Elias J.E."/>
            <person name="Goswami T."/>
            <person name="Rad R."/>
            <person name="Beausoleil S.A."/>
            <person name="Villen J."/>
            <person name="Haas W."/>
            <person name="Sowa M.E."/>
            <person name="Gygi S.P."/>
        </authorList>
    </citation>
    <scope>IDENTIFICATION BY MASS SPECTROMETRY [LARGE SCALE ANALYSIS]</scope>
    <source>
        <tissue>Lung</tissue>
    </source>
</reference>
<reference key="6">
    <citation type="journal article" date="2012" name="J. Biol. Chem.">
        <title>The TspanC8 subgroup of tetraspanins interacts with A disintegrin and metalloprotease 10 (ADAM10) and regulates its maturation and cell surface expression.</title>
        <authorList>
            <person name="Haining E.J."/>
            <person name="Yang J."/>
            <person name="Bailey R.L."/>
            <person name="Khan K."/>
            <person name="Collier R."/>
            <person name="Tsai S."/>
            <person name="Watson S.P."/>
            <person name="Frampton J."/>
            <person name="Garcia P."/>
            <person name="Tomlinson M.G."/>
        </authorList>
    </citation>
    <scope>FUNCTION</scope>
    <scope>INTERACTION WITH ADAM10</scope>
</reference>
<reference key="7">
    <citation type="journal article" date="2016" name="J. Biol. Chem.">
        <title>TspanC8 tetraspanins and A disintegrin and metalloprotease 10 (ADAM10) interact via their extracellular regions: evidence for distinct binding mechanisms for different TspanC8 proteins.</title>
        <authorList>
            <person name="Noy P.J."/>
            <person name="Yang J."/>
            <person name="Reyat J.S."/>
            <person name="Matthews A.L."/>
            <person name="Charlton A.E."/>
            <person name="Furmston J."/>
            <person name="Rogers D.A."/>
            <person name="Rainger G.E."/>
            <person name="Tomlinson M.G."/>
        </authorList>
    </citation>
    <scope>FUNCTION</scope>
    <scope>INTERACTION WITH ADAM10</scope>
</reference>
<reference key="8">
    <citation type="journal article" date="2018" name="Cell Rep.">
        <title>A Dock-and-Lock Mechanism Clusters ADAM10 at Cell-Cell Junctions to Promote alpha-Toxin Cytotoxicity.</title>
        <authorList>
            <person name="Shah J."/>
            <person name="Rouaud F."/>
            <person name="Guerrera D."/>
            <person name="Vasileva E."/>
            <person name="Popov L.M."/>
            <person name="Kelley W.L."/>
            <person name="Rubinstein E."/>
            <person name="Carette J.E."/>
            <person name="Amieva M.R."/>
            <person name="Citi S."/>
        </authorList>
    </citation>
    <scope>SUBCELLULAR LOCATION</scope>
</reference>
<keyword id="KW-0025">Alternative splicing</keyword>
<keyword id="KW-1003">Cell membrane</keyword>
<keyword id="KW-1015">Disulfide bond</keyword>
<keyword id="KW-0967">Endosome</keyword>
<keyword id="KW-0325">Glycoprotein</keyword>
<keyword id="KW-0472">Membrane</keyword>
<keyword id="KW-1185">Reference proteome</keyword>
<keyword id="KW-0812">Transmembrane</keyword>
<keyword id="KW-1133">Transmembrane helix</keyword>
<accession>F7BWT7</accession>
<accession>C0H5X1</accession>
<accession>Q3TA07</accession>
<feature type="chain" id="PRO_0000415812" description="Tetraspanin-15">
    <location>
        <begin position="1"/>
        <end position="294"/>
    </location>
</feature>
<feature type="topological domain" description="Cytoplasmic" evidence="2">
    <location>
        <begin position="1"/>
        <end position="23"/>
    </location>
</feature>
<feature type="transmembrane region" description="Helical" evidence="2">
    <location>
        <begin position="24"/>
        <end position="44"/>
    </location>
</feature>
<feature type="topological domain" description="Extracellular" evidence="2">
    <location>
        <begin position="45"/>
        <end position="62"/>
    </location>
</feature>
<feature type="transmembrane region" description="Helical" evidence="2">
    <location>
        <begin position="63"/>
        <end position="83"/>
    </location>
</feature>
<feature type="topological domain" description="Cytoplasmic" evidence="2">
    <location>
        <begin position="84"/>
        <end position="94"/>
    </location>
</feature>
<feature type="transmembrane region" description="Helical" evidence="2">
    <location>
        <begin position="95"/>
        <end position="115"/>
    </location>
</feature>
<feature type="topological domain" description="Extracellular" evidence="2">
    <location>
        <begin position="116"/>
        <end position="235"/>
    </location>
</feature>
<feature type="transmembrane region" description="Helical" evidence="2">
    <location>
        <begin position="236"/>
        <end position="256"/>
    </location>
</feature>
<feature type="topological domain" description="Cytoplasmic" evidence="2">
    <location>
        <begin position="257"/>
        <end position="294"/>
    </location>
</feature>
<feature type="glycosylation site" description="N-linked (GlcNAc...) asparagine" evidence="2">
    <location>
        <position position="118"/>
    </location>
</feature>
<feature type="glycosylation site" description="N-linked (GlcNAc...) asparagine" evidence="1 2">
    <location>
        <position position="189"/>
    </location>
</feature>
<feature type="glycosylation site" description="N-linked (GlcNAc...) asparagine" evidence="2">
    <location>
        <position position="230"/>
    </location>
</feature>
<feature type="disulfide bond" evidence="1">
    <location>
        <begin position="154"/>
        <end position="219"/>
    </location>
</feature>
<feature type="disulfide bond" evidence="1">
    <location>
        <begin position="155"/>
        <end position="185"/>
    </location>
</feature>
<feature type="disulfide bond" evidence="1">
    <location>
        <begin position="171"/>
        <end position="179"/>
    </location>
</feature>
<feature type="disulfide bond" evidence="1">
    <location>
        <begin position="186"/>
        <end position="198"/>
    </location>
</feature>
<feature type="splice variant" id="VSP_042389" description="In isoform 2." evidence="6">
    <original>TDVVNTMCGYKTIDKERLNAQNIIHVRGCTNAVLIWFMDNYTIMAGLLLGILLPQFLGVLLTLLYITRVEDIILEHSVTDGLLGPGAKSRTDTAGTGCCLCYPD</original>
    <variation>MLSTPCVATKQSTRSA</variation>
    <location>
        <begin position="191"/>
        <end position="294"/>
    </location>
</feature>
<feature type="sequence conflict" description="In Ref. 1; BAE42863." evidence="7" ref="1">
    <original>G</original>
    <variation>D</variation>
    <location>
        <position position="199"/>
    </location>
</feature>
<feature type="sequence conflict" description="In Ref. 1; BAE42863." evidence="7" ref="1">
    <original>R</original>
    <variation>S</variation>
    <location>
        <position position="280"/>
    </location>
</feature>
<dbReference type="EMBL" id="AK172169">
    <property type="protein sequence ID" value="BAE42863.1"/>
    <property type="status" value="ALT_INIT"/>
    <property type="molecule type" value="mRNA"/>
</dbReference>
<dbReference type="EMBL" id="AC127417">
    <property type="status" value="NOT_ANNOTATED_CDS"/>
    <property type="molecule type" value="Genomic_DNA"/>
</dbReference>
<dbReference type="EMBL" id="CH466553">
    <property type="protein sequence ID" value="EDL32110.1"/>
    <property type="molecule type" value="Genomic_DNA"/>
</dbReference>
<dbReference type="EMBL" id="BC003872">
    <property type="protein sequence ID" value="AAH03872.1"/>
    <property type="molecule type" value="mRNA"/>
</dbReference>
<dbReference type="CCDS" id="CCDS56705.1">
    <molecule id="F7BWT7-1"/>
</dbReference>
<dbReference type="RefSeq" id="NP_932113.2">
    <molecule id="F7BWT7-1"/>
    <property type="nucleotide sequence ID" value="NM_197996.2"/>
</dbReference>
<dbReference type="SMR" id="F7BWT7"/>
<dbReference type="BioGRID" id="214040">
    <property type="interactions" value="1"/>
</dbReference>
<dbReference type="FunCoup" id="F7BWT7">
    <property type="interactions" value="156"/>
</dbReference>
<dbReference type="STRING" id="10090.ENSMUSP00000047029"/>
<dbReference type="GlyCosmos" id="F7BWT7">
    <property type="glycosylation" value="3 sites, No reported glycans"/>
</dbReference>
<dbReference type="GlyGen" id="F7BWT7">
    <property type="glycosylation" value="3 sites, 1 N-linked glycan (1 site)"/>
</dbReference>
<dbReference type="iPTMnet" id="F7BWT7"/>
<dbReference type="PhosphoSitePlus" id="F7BWT7"/>
<dbReference type="SwissPalm" id="F7BWT7"/>
<dbReference type="PaxDb" id="10090-ENSMUSP00000047029"/>
<dbReference type="PeptideAtlas" id="F7BWT7"/>
<dbReference type="ProteomicsDB" id="297721">
    <molecule id="F7BWT7-1"/>
</dbReference>
<dbReference type="ProteomicsDB" id="297722">
    <molecule id="F7BWT7-2"/>
</dbReference>
<dbReference type="Antibodypedia" id="28879">
    <property type="antibodies" value="105 antibodies from 21 providers"/>
</dbReference>
<dbReference type="DNASU" id="70423"/>
<dbReference type="Ensembl" id="ENSMUST00000047883.11">
    <molecule id="F7BWT7-1"/>
    <property type="protein sequence ID" value="ENSMUSP00000047029.10"/>
    <property type="gene ID" value="ENSMUSG00000037031.11"/>
</dbReference>
<dbReference type="GeneID" id="70423"/>
<dbReference type="KEGG" id="mmu:70423"/>
<dbReference type="UCSC" id="uc007fgv.1">
    <molecule id="F7BWT7-1"/>
    <property type="organism name" value="mouse"/>
</dbReference>
<dbReference type="AGR" id="MGI:1917673"/>
<dbReference type="CTD" id="23555"/>
<dbReference type="MGI" id="MGI:1917673">
    <property type="gene designation" value="Tspan15"/>
</dbReference>
<dbReference type="VEuPathDB" id="HostDB:ENSMUSG00000037031"/>
<dbReference type="eggNOG" id="KOG3882">
    <property type="taxonomic scope" value="Eukaryota"/>
</dbReference>
<dbReference type="GeneTree" id="ENSGT00940000157973"/>
<dbReference type="HOGENOM" id="CLU_055524_0_1_1"/>
<dbReference type="InParanoid" id="F7BWT7"/>
<dbReference type="OMA" id="FAGAGCC"/>
<dbReference type="OrthoDB" id="10051815at2759"/>
<dbReference type="PhylomeDB" id="F7BWT7"/>
<dbReference type="TreeFam" id="TF313002"/>
<dbReference type="BioGRID-ORCS" id="70423">
    <property type="hits" value="0 hits in 78 CRISPR screens"/>
</dbReference>
<dbReference type="ChiTaRS" id="Tspan15">
    <property type="organism name" value="mouse"/>
</dbReference>
<dbReference type="PRO" id="PR:F7BWT7"/>
<dbReference type="Proteomes" id="UP000000589">
    <property type="component" value="Chromosome 10"/>
</dbReference>
<dbReference type="RNAct" id="F7BWT7">
    <property type="molecule type" value="protein"/>
</dbReference>
<dbReference type="Bgee" id="ENSMUSG00000037031">
    <property type="expression patterns" value="Expressed in small intestine Peyer's patch and 187 other cell types or tissues"/>
</dbReference>
<dbReference type="GO" id="GO:0030054">
    <property type="term" value="C:cell junction"/>
    <property type="evidence" value="ECO:0007669"/>
    <property type="project" value="Ensembl"/>
</dbReference>
<dbReference type="GO" id="GO:0009986">
    <property type="term" value="C:cell surface"/>
    <property type="evidence" value="ECO:0000314"/>
    <property type="project" value="UniProtKB"/>
</dbReference>
<dbReference type="GO" id="GO:0005829">
    <property type="term" value="C:cytosol"/>
    <property type="evidence" value="ECO:0007669"/>
    <property type="project" value="Ensembl"/>
</dbReference>
<dbReference type="GO" id="GO:0031902">
    <property type="term" value="C:late endosome membrane"/>
    <property type="evidence" value="ECO:0007669"/>
    <property type="project" value="UniProtKB-SubCell"/>
</dbReference>
<dbReference type="GO" id="GO:0016604">
    <property type="term" value="C:nuclear body"/>
    <property type="evidence" value="ECO:0007669"/>
    <property type="project" value="Ensembl"/>
</dbReference>
<dbReference type="GO" id="GO:0005886">
    <property type="term" value="C:plasma membrane"/>
    <property type="evidence" value="ECO:0000314"/>
    <property type="project" value="UniProtKB"/>
</dbReference>
<dbReference type="GO" id="GO:0097197">
    <property type="term" value="C:tetraspanin-enriched microdomain"/>
    <property type="evidence" value="ECO:0000314"/>
    <property type="project" value="UniProtKB"/>
</dbReference>
<dbReference type="GO" id="GO:0019899">
    <property type="term" value="F:enzyme binding"/>
    <property type="evidence" value="ECO:0000353"/>
    <property type="project" value="UniProtKB"/>
</dbReference>
<dbReference type="GO" id="GO:0045746">
    <property type="term" value="P:negative regulation of Notch signaling pathway"/>
    <property type="evidence" value="ECO:0007669"/>
    <property type="project" value="Ensembl"/>
</dbReference>
<dbReference type="GO" id="GO:0072659">
    <property type="term" value="P:protein localization to plasma membrane"/>
    <property type="evidence" value="ECO:0007669"/>
    <property type="project" value="Ensembl"/>
</dbReference>
<dbReference type="GO" id="GO:0051604">
    <property type="term" value="P:protein maturation"/>
    <property type="evidence" value="ECO:0000315"/>
    <property type="project" value="UniProtKB"/>
</dbReference>
<dbReference type="GO" id="GO:0051043">
    <property type="term" value="P:regulation of membrane protein ectodomain proteolysis"/>
    <property type="evidence" value="ECO:0000250"/>
    <property type="project" value="UniProtKB"/>
</dbReference>
<dbReference type="CDD" id="cd03158">
    <property type="entry name" value="penumbra_like_LEL"/>
    <property type="match status" value="1"/>
</dbReference>
<dbReference type="FunFam" id="1.10.1450.10:FF:000011">
    <property type="entry name" value="Tetraspanin"/>
    <property type="match status" value="1"/>
</dbReference>
<dbReference type="Gene3D" id="1.10.1450.10">
    <property type="entry name" value="Tetraspanin"/>
    <property type="match status" value="1"/>
</dbReference>
<dbReference type="InterPro" id="IPR018499">
    <property type="entry name" value="Tetraspanin/Peripherin"/>
</dbReference>
<dbReference type="InterPro" id="IPR000301">
    <property type="entry name" value="Tetraspanin_animals"/>
</dbReference>
<dbReference type="InterPro" id="IPR008952">
    <property type="entry name" value="Tetraspanin_EC2_sf"/>
</dbReference>
<dbReference type="PANTHER" id="PTHR19282">
    <property type="entry name" value="TETRASPANIN"/>
    <property type="match status" value="1"/>
</dbReference>
<dbReference type="PANTHER" id="PTHR19282:SF159">
    <property type="entry name" value="TETRASPANIN-15"/>
    <property type="match status" value="1"/>
</dbReference>
<dbReference type="Pfam" id="PF00335">
    <property type="entry name" value="Tetraspanin"/>
    <property type="match status" value="1"/>
</dbReference>
<dbReference type="PIRSF" id="PIRSF002419">
    <property type="entry name" value="Tetraspanin"/>
    <property type="match status" value="1"/>
</dbReference>
<dbReference type="PRINTS" id="PR00259">
    <property type="entry name" value="TMFOUR"/>
</dbReference>
<dbReference type="SUPFAM" id="SSF48652">
    <property type="entry name" value="Tetraspanin"/>
    <property type="match status" value="1"/>
</dbReference>
<evidence type="ECO:0000250" key="1">
    <source>
        <dbReference type="UniProtKB" id="O95858"/>
    </source>
</evidence>
<evidence type="ECO:0000255" key="2"/>
<evidence type="ECO:0000269" key="3">
    <source>
    </source>
</evidence>
<evidence type="ECO:0000269" key="4">
    <source>
    </source>
</evidence>
<evidence type="ECO:0000269" key="5">
    <source>
    </source>
</evidence>
<evidence type="ECO:0000303" key="6">
    <source>
    </source>
</evidence>
<evidence type="ECO:0000305" key="7"/>
<sequence length="294" mass="33071">MPRGDSEQVRYCARFSYLWLKFSLIIYSTVFWLIGGLVLSVGIYAEAERQKYKTLESAFLAPAIILILLGVVMFIVSFIGVLASLRDNLCLLQSFMYILGICLVMELIGGIVALIFRNQTIDFLNDNIRRGIENYYDDLDFKNIMDFVQKKFKCCGGEDYRDWSKNQYHDCSAPGPLACGVPYTCCIRNTTDVVNTMCGYKTIDKERLNAQNIIHVRGCTNAVLIWFMDNYTIMAGLLLGILLPQFLGVLLTLLYITRVEDIILEHSVTDGLLGPGAKSRTDTAGTGCCLCYPD</sequence>
<gene>
    <name type="primary">Tspan15</name>
</gene>